<gene>
    <name evidence="5" type="primary">Spaca7</name>
</gene>
<accession>Q9D2S4</accession>
<name>SPAC7_MOUSE</name>
<feature type="signal peptide" evidence="1">
    <location>
        <begin position="1"/>
        <end position="24"/>
    </location>
</feature>
<feature type="chain" id="PRO_0000350569" description="Sperm acrosome-associated protein 7">
    <location>
        <begin position="25"/>
        <end position="182"/>
    </location>
</feature>
<feature type="region of interest" description="Disordered" evidence="2">
    <location>
        <begin position="112"/>
        <end position="154"/>
    </location>
</feature>
<feature type="compositionally biased region" description="Basic and acidic residues" evidence="2">
    <location>
        <begin position="112"/>
        <end position="140"/>
    </location>
</feature>
<feature type="glycosylation site" description="N-linked (GlcNAc...) asparagine" evidence="1">
    <location>
        <position position="40"/>
    </location>
</feature>
<sequence>MAANRGSRTFLSVFLLCCWQGAELQPIKTTSGPITEGSLNSTTENIPEALDEILAQEILEPKTSAVSETSPRPRSSILTTVQTKEINAGIDENYQEEAFENYHEVLENIEHLPTKEESGKNDRSTVANLHDHSSQTKHEPPSSPEGKGSSNDDVYGKLSVLDKILENIGQSEGSLELTESIF</sequence>
<protein>
    <recommendedName>
        <fullName evidence="5">Sperm acrosome-associated protein 7</fullName>
    </recommendedName>
</protein>
<evidence type="ECO:0000255" key="1"/>
<evidence type="ECO:0000256" key="2">
    <source>
        <dbReference type="SAM" id="MobiDB-lite"/>
    </source>
</evidence>
<evidence type="ECO:0000269" key="3">
    <source>
    </source>
</evidence>
<evidence type="ECO:0000269" key="4">
    <source>
    </source>
</evidence>
<evidence type="ECO:0000312" key="5">
    <source>
        <dbReference type="MGI" id="MGI:1925884"/>
    </source>
</evidence>
<comment type="function">
    <text evidence="4">Involved in fertilization. Seems not to play a direct role in sperm-egg binding or gamete fusion.</text>
</comment>
<comment type="subcellular location">
    <subcellularLocation>
        <location evidence="3">Secreted</location>
    </subcellularLocation>
    <subcellularLocation>
        <location evidence="3 4">Cytoplasmic vesicle</location>
        <location evidence="3 4">Secretory vesicle</location>
        <location evidence="3 4">Acrosome lumen</location>
    </subcellularLocation>
    <text evidence="4">Localized in perinuclear pro-acrosomal granules in round spermatides (PubMed:24307706). Localized between the inner and outer acrosomal membranes (matrix or lumen) in spermatozoa (PubMed:24307706). Secreted during acrosome exocytosis (PubMed:24307706).</text>
</comment>
<comment type="tissue specificity">
    <text evidence="3 4">Testis-specific (PubMed:22495889, PubMed:24307706). Expressed in zygotene and pachytene spermatocytes, round spermatids, elongating spermatids and spermatozoa (at protein level) (PubMed:22495889, PubMed:24307706). Testis-specific (PubMed:22495889).</text>
</comment>
<proteinExistence type="evidence at protein level"/>
<reference key="1">
    <citation type="journal article" date="2005" name="Science">
        <title>The transcriptional landscape of the mammalian genome.</title>
        <authorList>
            <person name="Carninci P."/>
            <person name="Kasukawa T."/>
            <person name="Katayama S."/>
            <person name="Gough J."/>
            <person name="Frith M.C."/>
            <person name="Maeda N."/>
            <person name="Oyama R."/>
            <person name="Ravasi T."/>
            <person name="Lenhard B."/>
            <person name="Wells C."/>
            <person name="Kodzius R."/>
            <person name="Shimokawa K."/>
            <person name="Bajic V.B."/>
            <person name="Brenner S.E."/>
            <person name="Batalov S."/>
            <person name="Forrest A.R."/>
            <person name="Zavolan M."/>
            <person name="Davis M.J."/>
            <person name="Wilming L.G."/>
            <person name="Aidinis V."/>
            <person name="Allen J.E."/>
            <person name="Ambesi-Impiombato A."/>
            <person name="Apweiler R."/>
            <person name="Aturaliya R.N."/>
            <person name="Bailey T.L."/>
            <person name="Bansal M."/>
            <person name="Baxter L."/>
            <person name="Beisel K.W."/>
            <person name="Bersano T."/>
            <person name="Bono H."/>
            <person name="Chalk A.M."/>
            <person name="Chiu K.P."/>
            <person name="Choudhary V."/>
            <person name="Christoffels A."/>
            <person name="Clutterbuck D.R."/>
            <person name="Crowe M.L."/>
            <person name="Dalla E."/>
            <person name="Dalrymple B.P."/>
            <person name="de Bono B."/>
            <person name="Della Gatta G."/>
            <person name="di Bernardo D."/>
            <person name="Down T."/>
            <person name="Engstrom P."/>
            <person name="Fagiolini M."/>
            <person name="Faulkner G."/>
            <person name="Fletcher C.F."/>
            <person name="Fukushima T."/>
            <person name="Furuno M."/>
            <person name="Futaki S."/>
            <person name="Gariboldi M."/>
            <person name="Georgii-Hemming P."/>
            <person name="Gingeras T.R."/>
            <person name="Gojobori T."/>
            <person name="Green R.E."/>
            <person name="Gustincich S."/>
            <person name="Harbers M."/>
            <person name="Hayashi Y."/>
            <person name="Hensch T.K."/>
            <person name="Hirokawa N."/>
            <person name="Hill D."/>
            <person name="Huminiecki L."/>
            <person name="Iacono M."/>
            <person name="Ikeo K."/>
            <person name="Iwama A."/>
            <person name="Ishikawa T."/>
            <person name="Jakt M."/>
            <person name="Kanapin A."/>
            <person name="Katoh M."/>
            <person name="Kawasawa Y."/>
            <person name="Kelso J."/>
            <person name="Kitamura H."/>
            <person name="Kitano H."/>
            <person name="Kollias G."/>
            <person name="Krishnan S.P."/>
            <person name="Kruger A."/>
            <person name="Kummerfeld S.K."/>
            <person name="Kurochkin I.V."/>
            <person name="Lareau L.F."/>
            <person name="Lazarevic D."/>
            <person name="Lipovich L."/>
            <person name="Liu J."/>
            <person name="Liuni S."/>
            <person name="McWilliam S."/>
            <person name="Madan Babu M."/>
            <person name="Madera M."/>
            <person name="Marchionni L."/>
            <person name="Matsuda H."/>
            <person name="Matsuzawa S."/>
            <person name="Miki H."/>
            <person name="Mignone F."/>
            <person name="Miyake S."/>
            <person name="Morris K."/>
            <person name="Mottagui-Tabar S."/>
            <person name="Mulder N."/>
            <person name="Nakano N."/>
            <person name="Nakauchi H."/>
            <person name="Ng P."/>
            <person name="Nilsson R."/>
            <person name="Nishiguchi S."/>
            <person name="Nishikawa S."/>
            <person name="Nori F."/>
            <person name="Ohara O."/>
            <person name="Okazaki Y."/>
            <person name="Orlando V."/>
            <person name="Pang K.C."/>
            <person name="Pavan W.J."/>
            <person name="Pavesi G."/>
            <person name="Pesole G."/>
            <person name="Petrovsky N."/>
            <person name="Piazza S."/>
            <person name="Reed J."/>
            <person name="Reid J.F."/>
            <person name="Ring B.Z."/>
            <person name="Ringwald M."/>
            <person name="Rost B."/>
            <person name="Ruan Y."/>
            <person name="Salzberg S.L."/>
            <person name="Sandelin A."/>
            <person name="Schneider C."/>
            <person name="Schoenbach C."/>
            <person name="Sekiguchi K."/>
            <person name="Semple C.A."/>
            <person name="Seno S."/>
            <person name="Sessa L."/>
            <person name="Sheng Y."/>
            <person name="Shibata Y."/>
            <person name="Shimada H."/>
            <person name="Shimada K."/>
            <person name="Silva D."/>
            <person name="Sinclair B."/>
            <person name="Sperling S."/>
            <person name="Stupka E."/>
            <person name="Sugiura K."/>
            <person name="Sultana R."/>
            <person name="Takenaka Y."/>
            <person name="Taki K."/>
            <person name="Tammoja K."/>
            <person name="Tan S.L."/>
            <person name="Tang S."/>
            <person name="Taylor M.S."/>
            <person name="Tegner J."/>
            <person name="Teichmann S.A."/>
            <person name="Ueda H.R."/>
            <person name="van Nimwegen E."/>
            <person name="Verardo R."/>
            <person name="Wei C.L."/>
            <person name="Yagi K."/>
            <person name="Yamanishi H."/>
            <person name="Zabarovsky E."/>
            <person name="Zhu S."/>
            <person name="Zimmer A."/>
            <person name="Hide W."/>
            <person name="Bult C."/>
            <person name="Grimmond S.M."/>
            <person name="Teasdale R.D."/>
            <person name="Liu E.T."/>
            <person name="Brusic V."/>
            <person name="Quackenbush J."/>
            <person name="Wahlestedt C."/>
            <person name="Mattick J.S."/>
            <person name="Hume D.A."/>
            <person name="Kai C."/>
            <person name="Sasaki D."/>
            <person name="Tomaru Y."/>
            <person name="Fukuda S."/>
            <person name="Kanamori-Katayama M."/>
            <person name="Suzuki M."/>
            <person name="Aoki J."/>
            <person name="Arakawa T."/>
            <person name="Iida J."/>
            <person name="Imamura K."/>
            <person name="Itoh M."/>
            <person name="Kato T."/>
            <person name="Kawaji H."/>
            <person name="Kawagashira N."/>
            <person name="Kawashima T."/>
            <person name="Kojima M."/>
            <person name="Kondo S."/>
            <person name="Konno H."/>
            <person name="Nakano K."/>
            <person name="Ninomiya N."/>
            <person name="Nishio T."/>
            <person name="Okada M."/>
            <person name="Plessy C."/>
            <person name="Shibata K."/>
            <person name="Shiraki T."/>
            <person name="Suzuki S."/>
            <person name="Tagami M."/>
            <person name="Waki K."/>
            <person name="Watahiki A."/>
            <person name="Okamura-Oho Y."/>
            <person name="Suzuki H."/>
            <person name="Kawai J."/>
            <person name="Hayashizaki Y."/>
        </authorList>
    </citation>
    <scope>NUCLEOTIDE SEQUENCE [LARGE SCALE MRNA]</scope>
    <source>
        <strain>C57BL/6J</strain>
        <tissue>Testis</tissue>
    </source>
</reference>
<reference key="2">
    <citation type="journal article" date="2012" name="Reproduction">
        <title>Identification of a new mouse sperm acrosome-associated protein.</title>
        <authorList>
            <person name="Korfanty J."/>
            <person name="Toma A."/>
            <person name="Wojtas A."/>
            <person name="Rusin A."/>
            <person name="Vydra N."/>
            <person name="Widlak W."/>
        </authorList>
    </citation>
    <scope>SUBCELLULAR LOCATION</scope>
    <scope>TISSUE SPECIFICITY</scope>
</reference>
<reference key="3">
    <citation type="journal article" date="2014" name="Biol. Reprod.">
        <title>SPACA7 is a novel male germ cell-specific protein localized to the sperm acrosome that is involved in fertilization in mice.</title>
        <authorList>
            <person name="Nguyen E.B."/>
            <person name="Westmuckett A.D."/>
            <person name="Moore K.L."/>
        </authorList>
    </citation>
    <scope>FUNCTION</scope>
    <scope>SUBCELLULAR LOCATION</scope>
    <scope>TISSUE SPECIFICITY</scope>
</reference>
<dbReference type="EMBL" id="AK018926">
    <property type="protein sequence ID" value="BAB31486.1"/>
    <property type="molecule type" value="mRNA"/>
</dbReference>
<dbReference type="CCDS" id="CCDS40222.1"/>
<dbReference type="RefSeq" id="NP_077241.1">
    <property type="nucleotide sequence ID" value="NM_024279.4"/>
</dbReference>
<dbReference type="FunCoup" id="Q9D2S4">
    <property type="interactions" value="14"/>
</dbReference>
<dbReference type="STRING" id="10090.ENSMUSP00000010579"/>
<dbReference type="GlyCosmos" id="Q9D2S4">
    <property type="glycosylation" value="1 site, No reported glycans"/>
</dbReference>
<dbReference type="GlyGen" id="Q9D2S4">
    <property type="glycosylation" value="1 site"/>
</dbReference>
<dbReference type="PhosphoSitePlus" id="Q9D2S4"/>
<dbReference type="PaxDb" id="10090-ENSMUSP00000010579"/>
<dbReference type="ProteomicsDB" id="257334"/>
<dbReference type="Antibodypedia" id="42580">
    <property type="antibodies" value="56 antibodies from 13 providers"/>
</dbReference>
<dbReference type="DNASU" id="78634"/>
<dbReference type="Ensembl" id="ENSMUST00000010579.8">
    <property type="protein sequence ID" value="ENSMUSP00000010579.7"/>
    <property type="gene ID" value="ENSMUSG00000010435.8"/>
</dbReference>
<dbReference type="GeneID" id="78634"/>
<dbReference type="KEGG" id="mmu:78634"/>
<dbReference type="UCSC" id="uc009kwc.1">
    <property type="organism name" value="mouse"/>
</dbReference>
<dbReference type="AGR" id="MGI:1925884"/>
<dbReference type="CTD" id="122258"/>
<dbReference type="MGI" id="MGI:1925884">
    <property type="gene designation" value="Spaca7"/>
</dbReference>
<dbReference type="VEuPathDB" id="HostDB:ENSMUSG00000010435"/>
<dbReference type="eggNOG" id="ENOG502TF3C">
    <property type="taxonomic scope" value="Eukaryota"/>
</dbReference>
<dbReference type="GeneTree" id="ENSGT00390000018090"/>
<dbReference type="HOGENOM" id="CLU_120537_0_0_1"/>
<dbReference type="InParanoid" id="Q9D2S4"/>
<dbReference type="OMA" id="WTEMPST"/>
<dbReference type="OrthoDB" id="9610380at2759"/>
<dbReference type="PhylomeDB" id="Q9D2S4"/>
<dbReference type="TreeFam" id="TF338340"/>
<dbReference type="BioGRID-ORCS" id="78634">
    <property type="hits" value="2 hits in 77 CRISPR screens"/>
</dbReference>
<dbReference type="PRO" id="PR:Q9D2S4"/>
<dbReference type="Proteomes" id="UP000000589">
    <property type="component" value="Chromosome 8"/>
</dbReference>
<dbReference type="RNAct" id="Q9D2S4">
    <property type="molecule type" value="protein"/>
</dbReference>
<dbReference type="Bgee" id="ENSMUSG00000010435">
    <property type="expression patterns" value="Expressed in seminiferous tubule of testis and 9 other cell types or tissues"/>
</dbReference>
<dbReference type="ExpressionAtlas" id="Q9D2S4">
    <property type="expression patterns" value="baseline and differential"/>
</dbReference>
<dbReference type="GO" id="GO:0043160">
    <property type="term" value="C:acrosomal lumen"/>
    <property type="evidence" value="ECO:0007669"/>
    <property type="project" value="UniProtKB-SubCell"/>
</dbReference>
<dbReference type="GO" id="GO:0001669">
    <property type="term" value="C:acrosomal vesicle"/>
    <property type="evidence" value="ECO:0000314"/>
    <property type="project" value="MGI"/>
</dbReference>
<dbReference type="GO" id="GO:0005576">
    <property type="term" value="C:extracellular region"/>
    <property type="evidence" value="ECO:0007669"/>
    <property type="project" value="UniProtKB-SubCell"/>
</dbReference>
<dbReference type="GO" id="GO:0007155">
    <property type="term" value="P:cell adhesion"/>
    <property type="evidence" value="ECO:0000315"/>
    <property type="project" value="MGI"/>
</dbReference>
<dbReference type="GO" id="GO:0007162">
    <property type="term" value="P:negative regulation of cell adhesion"/>
    <property type="evidence" value="ECO:0000315"/>
    <property type="project" value="MGI"/>
</dbReference>
<dbReference type="GO" id="GO:0007338">
    <property type="term" value="P:single fertilization"/>
    <property type="evidence" value="ECO:0000315"/>
    <property type="project" value="MGI"/>
</dbReference>
<dbReference type="InterPro" id="IPR029301">
    <property type="entry name" value="SPACA7"/>
</dbReference>
<dbReference type="Pfam" id="PF15307">
    <property type="entry name" value="SPACA7"/>
    <property type="match status" value="1"/>
</dbReference>
<organism>
    <name type="scientific">Mus musculus</name>
    <name type="common">Mouse</name>
    <dbReference type="NCBI Taxonomy" id="10090"/>
    <lineage>
        <taxon>Eukaryota</taxon>
        <taxon>Metazoa</taxon>
        <taxon>Chordata</taxon>
        <taxon>Craniata</taxon>
        <taxon>Vertebrata</taxon>
        <taxon>Euteleostomi</taxon>
        <taxon>Mammalia</taxon>
        <taxon>Eutheria</taxon>
        <taxon>Euarchontoglires</taxon>
        <taxon>Glires</taxon>
        <taxon>Rodentia</taxon>
        <taxon>Myomorpha</taxon>
        <taxon>Muroidea</taxon>
        <taxon>Muridae</taxon>
        <taxon>Murinae</taxon>
        <taxon>Mus</taxon>
        <taxon>Mus</taxon>
    </lineage>
</organism>
<keyword id="KW-0968">Cytoplasmic vesicle</keyword>
<keyword id="KW-0278">Fertilization</keyword>
<keyword id="KW-0325">Glycoprotein</keyword>
<keyword id="KW-1185">Reference proteome</keyword>
<keyword id="KW-0964">Secreted</keyword>
<keyword id="KW-0732">Signal</keyword>